<proteinExistence type="inferred from homology"/>
<evidence type="ECO:0000255" key="1">
    <source>
        <dbReference type="HAMAP-Rule" id="MF_00572"/>
    </source>
</evidence>
<dbReference type="EC" id="2.3.3.13" evidence="1"/>
<dbReference type="EMBL" id="AM711867">
    <property type="protein sequence ID" value="CAN01627.1"/>
    <property type="molecule type" value="Genomic_DNA"/>
</dbReference>
<dbReference type="RefSeq" id="WP_012038263.1">
    <property type="nucleotide sequence ID" value="NC_009480.1"/>
</dbReference>
<dbReference type="SMR" id="A5CRB9"/>
<dbReference type="KEGG" id="cmi:CMM_1576"/>
<dbReference type="eggNOG" id="COG0119">
    <property type="taxonomic scope" value="Bacteria"/>
</dbReference>
<dbReference type="HOGENOM" id="CLU_004588_3_0_11"/>
<dbReference type="OrthoDB" id="9803573at2"/>
<dbReference type="UniPathway" id="UPA00048">
    <property type="reaction ID" value="UER00070"/>
</dbReference>
<dbReference type="Proteomes" id="UP000001564">
    <property type="component" value="Chromosome"/>
</dbReference>
<dbReference type="GO" id="GO:0005737">
    <property type="term" value="C:cytoplasm"/>
    <property type="evidence" value="ECO:0007669"/>
    <property type="project" value="UniProtKB-SubCell"/>
</dbReference>
<dbReference type="GO" id="GO:0003852">
    <property type="term" value="F:2-isopropylmalate synthase activity"/>
    <property type="evidence" value="ECO:0007669"/>
    <property type="project" value="UniProtKB-UniRule"/>
</dbReference>
<dbReference type="GO" id="GO:0003985">
    <property type="term" value="F:acetyl-CoA C-acetyltransferase activity"/>
    <property type="evidence" value="ECO:0007669"/>
    <property type="project" value="UniProtKB-UniRule"/>
</dbReference>
<dbReference type="GO" id="GO:0000287">
    <property type="term" value="F:magnesium ion binding"/>
    <property type="evidence" value="ECO:0007669"/>
    <property type="project" value="UniProtKB-UniRule"/>
</dbReference>
<dbReference type="GO" id="GO:0009098">
    <property type="term" value="P:L-leucine biosynthetic process"/>
    <property type="evidence" value="ECO:0007669"/>
    <property type="project" value="UniProtKB-UniRule"/>
</dbReference>
<dbReference type="CDD" id="cd07942">
    <property type="entry name" value="DRE_TIM_LeuA"/>
    <property type="match status" value="1"/>
</dbReference>
<dbReference type="FunFam" id="3.20.20.70:FF:000045">
    <property type="entry name" value="2-isopropylmalate synthase"/>
    <property type="match status" value="1"/>
</dbReference>
<dbReference type="Gene3D" id="3.30.160.270">
    <property type="match status" value="1"/>
</dbReference>
<dbReference type="Gene3D" id="3.20.20.70">
    <property type="entry name" value="Aldolase class I"/>
    <property type="match status" value="1"/>
</dbReference>
<dbReference type="HAMAP" id="MF_00572">
    <property type="entry name" value="LeuA_type2"/>
    <property type="match status" value="1"/>
</dbReference>
<dbReference type="InterPro" id="IPR013709">
    <property type="entry name" value="2-isopropylmalate_synth_dimer"/>
</dbReference>
<dbReference type="InterPro" id="IPR002034">
    <property type="entry name" value="AIPM/Hcit_synth_CS"/>
</dbReference>
<dbReference type="InterPro" id="IPR013785">
    <property type="entry name" value="Aldolase_TIM"/>
</dbReference>
<dbReference type="InterPro" id="IPR005668">
    <property type="entry name" value="IPM_Synthase"/>
</dbReference>
<dbReference type="InterPro" id="IPR054692">
    <property type="entry name" value="LeuA-like_post-cat"/>
</dbReference>
<dbReference type="InterPro" id="IPR036230">
    <property type="entry name" value="LeuA_allosteric_dom_sf"/>
</dbReference>
<dbReference type="InterPro" id="IPR039371">
    <property type="entry name" value="LeuA_N_DRE-TIM"/>
</dbReference>
<dbReference type="InterPro" id="IPR000891">
    <property type="entry name" value="PYR_CT"/>
</dbReference>
<dbReference type="NCBIfam" id="TIGR00970">
    <property type="entry name" value="leuA_yeast"/>
    <property type="match status" value="1"/>
</dbReference>
<dbReference type="NCBIfam" id="NF002991">
    <property type="entry name" value="PRK03739.1"/>
    <property type="match status" value="1"/>
</dbReference>
<dbReference type="PANTHER" id="PTHR46911">
    <property type="match status" value="1"/>
</dbReference>
<dbReference type="PANTHER" id="PTHR46911:SF1">
    <property type="entry name" value="2-ISOPROPYLMALATE SYNTHASE"/>
    <property type="match status" value="1"/>
</dbReference>
<dbReference type="Pfam" id="PF00682">
    <property type="entry name" value="HMGL-like"/>
    <property type="match status" value="1"/>
</dbReference>
<dbReference type="Pfam" id="PF22615">
    <property type="entry name" value="IPMS_D2"/>
    <property type="match status" value="1"/>
</dbReference>
<dbReference type="Pfam" id="PF08502">
    <property type="entry name" value="LeuA_dimer"/>
    <property type="match status" value="1"/>
</dbReference>
<dbReference type="SMART" id="SM00917">
    <property type="entry name" value="LeuA_dimer"/>
    <property type="match status" value="1"/>
</dbReference>
<dbReference type="SUPFAM" id="SSF110921">
    <property type="entry name" value="2-isopropylmalate synthase LeuA, allosteric (dimerisation) domain"/>
    <property type="match status" value="1"/>
</dbReference>
<dbReference type="SUPFAM" id="SSF51569">
    <property type="entry name" value="Aldolase"/>
    <property type="match status" value="1"/>
</dbReference>
<dbReference type="SUPFAM" id="SSF89000">
    <property type="entry name" value="post-HMGL domain-like"/>
    <property type="match status" value="1"/>
</dbReference>
<dbReference type="PROSITE" id="PS00815">
    <property type="entry name" value="AIPM_HOMOCIT_SYNTH_1"/>
    <property type="match status" value="1"/>
</dbReference>
<dbReference type="PROSITE" id="PS00816">
    <property type="entry name" value="AIPM_HOMOCIT_SYNTH_2"/>
    <property type="match status" value="1"/>
</dbReference>
<dbReference type="PROSITE" id="PS50991">
    <property type="entry name" value="PYR_CT"/>
    <property type="match status" value="1"/>
</dbReference>
<accession>A5CRB9</accession>
<comment type="function">
    <text evidence="1">Catalyzes the condensation of the acetyl group of acetyl-CoA with 3-methyl-2-oxobutanoate (2-ketoisovalerate) to form 3-carboxy-3-hydroxy-4-methylpentanoate (2-isopropylmalate).</text>
</comment>
<comment type="catalytic activity">
    <reaction evidence="1">
        <text>3-methyl-2-oxobutanoate + acetyl-CoA + H2O = (2S)-2-isopropylmalate + CoA + H(+)</text>
        <dbReference type="Rhea" id="RHEA:21524"/>
        <dbReference type="ChEBI" id="CHEBI:1178"/>
        <dbReference type="ChEBI" id="CHEBI:11851"/>
        <dbReference type="ChEBI" id="CHEBI:15377"/>
        <dbReference type="ChEBI" id="CHEBI:15378"/>
        <dbReference type="ChEBI" id="CHEBI:57287"/>
        <dbReference type="ChEBI" id="CHEBI:57288"/>
        <dbReference type="EC" id="2.3.3.13"/>
    </reaction>
</comment>
<comment type="cofactor">
    <cofactor evidence="1">
        <name>Mg(2+)</name>
        <dbReference type="ChEBI" id="CHEBI:18420"/>
    </cofactor>
</comment>
<comment type="pathway">
    <text evidence="1">Amino-acid biosynthesis; L-leucine biosynthesis; L-leucine from 3-methyl-2-oxobutanoate: step 1/4.</text>
</comment>
<comment type="subunit">
    <text evidence="1">Homodimer.</text>
</comment>
<comment type="subcellular location">
    <subcellularLocation>
        <location evidence="1">Cytoplasm</location>
    </subcellularLocation>
</comment>
<comment type="similarity">
    <text evidence="1">Belongs to the alpha-IPM synthase/homocitrate synthase family. LeuA type 2 subfamily.</text>
</comment>
<reference key="1">
    <citation type="journal article" date="2008" name="J. Bacteriol.">
        <title>The genome sequence of the tomato-pathogenic actinomycete Clavibacter michiganensis subsp. michiganensis NCPPB382 reveals a large island involved in pathogenicity.</title>
        <authorList>
            <person name="Gartemann K.-H."/>
            <person name="Abt B."/>
            <person name="Bekel T."/>
            <person name="Burger A."/>
            <person name="Engemann J."/>
            <person name="Fluegel M."/>
            <person name="Gaigalat L."/>
            <person name="Goesmann A."/>
            <person name="Graefen I."/>
            <person name="Kalinowski J."/>
            <person name="Kaup O."/>
            <person name="Kirchner O."/>
            <person name="Krause L."/>
            <person name="Linke B."/>
            <person name="McHardy A."/>
            <person name="Meyer F."/>
            <person name="Pohle S."/>
            <person name="Rueckert C."/>
            <person name="Schneiker S."/>
            <person name="Zellermann E.-M."/>
            <person name="Puehler A."/>
            <person name="Eichenlaub R."/>
            <person name="Kaiser O."/>
            <person name="Bartels D."/>
        </authorList>
    </citation>
    <scope>NUCLEOTIDE SEQUENCE [LARGE SCALE GENOMIC DNA]</scope>
    <source>
        <strain>NCPPB 382</strain>
    </source>
</reference>
<name>LEU1_CLAM3</name>
<sequence>MKSTQTPSGMPIHKYRPFHEQIAVDLPDRTWPARRITEAPRWCAVDLRDGNQALIDPMSPERKRIMFDLLVRMGYKEIEVGFPSASQTDFDFVRSLIEEGAIPDDVTIQVLTQAREHLIARTYESLRGAKQAIVHLYNSTSVLQREVVFRTDKQGIIDIALEGARLCKRYEETIPEVDVYYEYSPESYTGTELEFAAEICNRVVEVLEPTPERKVILNLPATVEMATPNVYADSIEWMCRHLDRRDEVIVSLHPHNDRGTAVAAAELGYLAGADRIEGCLFGNGERTGNVDLVALGINLFTQGIDPQIDFSDLDGIKRTAEHCNQLAVPERSPWAGDLVYTAFSGSHQDAIKKGFEAMAADAAAQGVTVDEIPWAVPYLPVDPQDLGRSYEAVIRVNSQSGKGGVAYLLKADHSLDLPRRLQIEFSGVVQAKTDAEGGEIPSAQIWSIFQDEYLPAPLDRVEEKWGRFELTSTRTSSDMGGSVSLEVELRDGDRVREASASGNGPIAAFLKVLADQGVDVRLLDYVEHALSASGDALAASYVELEVEGVRLWGVGIDEDSSTASLEAIVSGVNRAIRRTVREPELAAV</sequence>
<keyword id="KW-0028">Amino-acid biosynthesis</keyword>
<keyword id="KW-0100">Branched-chain amino acid biosynthesis</keyword>
<keyword id="KW-0963">Cytoplasm</keyword>
<keyword id="KW-0432">Leucine biosynthesis</keyword>
<keyword id="KW-0460">Magnesium</keyword>
<keyword id="KW-0479">Metal-binding</keyword>
<keyword id="KW-0808">Transferase</keyword>
<gene>
    <name evidence="1" type="primary">leuA</name>
    <name type="ordered locus">CMM_1576</name>
</gene>
<protein>
    <recommendedName>
        <fullName evidence="1">2-isopropylmalate synthase</fullName>
        <ecNumber evidence="1">2.3.3.13</ecNumber>
    </recommendedName>
    <alternativeName>
        <fullName evidence="1">Alpha-IPM synthase</fullName>
    </alternativeName>
    <alternativeName>
        <fullName evidence="1">Alpha-isopropylmalate synthase</fullName>
    </alternativeName>
</protein>
<feature type="chain" id="PRO_1000129502" description="2-isopropylmalate synthase">
    <location>
        <begin position="1"/>
        <end position="588"/>
    </location>
</feature>
<feature type="domain" description="Pyruvate carboxyltransferase" evidence="1">
    <location>
        <begin position="40"/>
        <end position="314"/>
    </location>
</feature>
<feature type="region of interest" description="Regulatory domain" evidence="1">
    <location>
        <begin position="456"/>
        <end position="588"/>
    </location>
</feature>
<feature type="binding site" evidence="1">
    <location>
        <position position="49"/>
    </location>
    <ligand>
        <name>Mg(2+)</name>
        <dbReference type="ChEBI" id="CHEBI:18420"/>
    </ligand>
</feature>
<feature type="binding site" evidence="1">
    <location>
        <position position="253"/>
    </location>
    <ligand>
        <name>Mg(2+)</name>
        <dbReference type="ChEBI" id="CHEBI:18420"/>
    </ligand>
</feature>
<feature type="binding site" evidence="1">
    <location>
        <position position="255"/>
    </location>
    <ligand>
        <name>Mg(2+)</name>
        <dbReference type="ChEBI" id="CHEBI:18420"/>
    </ligand>
</feature>
<feature type="binding site" evidence="1">
    <location>
        <position position="289"/>
    </location>
    <ligand>
        <name>Mg(2+)</name>
        <dbReference type="ChEBI" id="CHEBI:18420"/>
    </ligand>
</feature>
<organism>
    <name type="scientific">Clavibacter michiganensis subsp. michiganensis (strain NCPPB 382)</name>
    <dbReference type="NCBI Taxonomy" id="443906"/>
    <lineage>
        <taxon>Bacteria</taxon>
        <taxon>Bacillati</taxon>
        <taxon>Actinomycetota</taxon>
        <taxon>Actinomycetes</taxon>
        <taxon>Micrococcales</taxon>
        <taxon>Microbacteriaceae</taxon>
        <taxon>Clavibacter</taxon>
    </lineage>
</organism>